<evidence type="ECO:0000255" key="1">
    <source>
        <dbReference type="HAMAP-Rule" id="MF_01212"/>
    </source>
</evidence>
<evidence type="ECO:0000255" key="2">
    <source>
        <dbReference type="PROSITE-ProRule" id="PRU01175"/>
    </source>
</evidence>
<evidence type="ECO:0000256" key="3">
    <source>
        <dbReference type="SAM" id="MobiDB-lite"/>
    </source>
</evidence>
<reference key="1">
    <citation type="submission" date="2006-05" db="EMBL/GenBank/DDBJ databases">
        <title>Complete sequence of chromosome of Silicibacter sp. TM1040.</title>
        <authorList>
            <consortium name="US DOE Joint Genome Institute"/>
            <person name="Copeland A."/>
            <person name="Lucas S."/>
            <person name="Lapidus A."/>
            <person name="Barry K."/>
            <person name="Detter J.C."/>
            <person name="Glavina del Rio T."/>
            <person name="Hammon N."/>
            <person name="Israni S."/>
            <person name="Dalin E."/>
            <person name="Tice H."/>
            <person name="Pitluck S."/>
            <person name="Brettin T."/>
            <person name="Bruce D."/>
            <person name="Han C."/>
            <person name="Tapia R."/>
            <person name="Goodwin L."/>
            <person name="Thompson L.S."/>
            <person name="Gilna P."/>
            <person name="Schmutz J."/>
            <person name="Larimer F."/>
            <person name="Land M."/>
            <person name="Hauser L."/>
            <person name="Kyrpides N."/>
            <person name="Kim E."/>
            <person name="Belas R."/>
            <person name="Moran M.A."/>
            <person name="Buchan A."/>
            <person name="Gonzalez J.M."/>
            <person name="Schell M.A."/>
            <person name="Sun F."/>
            <person name="Richardson P."/>
        </authorList>
    </citation>
    <scope>NUCLEOTIDE SEQUENCE [LARGE SCALE GENOMIC DNA]</scope>
    <source>
        <strain>TM1040</strain>
    </source>
</reference>
<keyword id="KW-0378">Hydrolase</keyword>
<keyword id="KW-1185">Reference proteome</keyword>
<proteinExistence type="inferred from homology"/>
<comment type="similarity">
    <text evidence="1">Belongs to the dGTPase family. Type 2 subfamily.</text>
</comment>
<feature type="chain" id="PRO_1000164741" description="Deoxyguanosinetriphosphate triphosphohydrolase-like protein">
    <location>
        <begin position="1"/>
        <end position="380"/>
    </location>
</feature>
<feature type="domain" description="HD" evidence="2">
    <location>
        <begin position="62"/>
        <end position="198"/>
    </location>
</feature>
<feature type="region of interest" description="Disordered" evidence="3">
    <location>
        <begin position="1"/>
        <end position="28"/>
    </location>
</feature>
<gene>
    <name type="ordered locus">TM1040_0902</name>
</gene>
<name>DGTL1_RUEST</name>
<dbReference type="EMBL" id="CP000377">
    <property type="protein sequence ID" value="ABF63635.1"/>
    <property type="molecule type" value="Genomic_DNA"/>
</dbReference>
<dbReference type="RefSeq" id="WP_011538247.1">
    <property type="nucleotide sequence ID" value="NC_008044.1"/>
</dbReference>
<dbReference type="SMR" id="Q1GI81"/>
<dbReference type="STRING" id="292414.TM1040_0902"/>
<dbReference type="KEGG" id="sit:TM1040_0902"/>
<dbReference type="eggNOG" id="COG0232">
    <property type="taxonomic scope" value="Bacteria"/>
</dbReference>
<dbReference type="HOGENOM" id="CLU_028163_1_0_5"/>
<dbReference type="OrthoDB" id="9803619at2"/>
<dbReference type="Proteomes" id="UP000000636">
    <property type="component" value="Chromosome"/>
</dbReference>
<dbReference type="GO" id="GO:0016793">
    <property type="term" value="F:triphosphoric monoester hydrolase activity"/>
    <property type="evidence" value="ECO:0007669"/>
    <property type="project" value="InterPro"/>
</dbReference>
<dbReference type="CDD" id="cd00077">
    <property type="entry name" value="HDc"/>
    <property type="match status" value="1"/>
</dbReference>
<dbReference type="Gene3D" id="1.10.3210.10">
    <property type="entry name" value="Hypothetical protein af1432"/>
    <property type="match status" value="1"/>
</dbReference>
<dbReference type="HAMAP" id="MF_01212">
    <property type="entry name" value="dGTPase_type2"/>
    <property type="match status" value="1"/>
</dbReference>
<dbReference type="InterPro" id="IPR006261">
    <property type="entry name" value="dGTPase"/>
</dbReference>
<dbReference type="InterPro" id="IPR051094">
    <property type="entry name" value="Diverse_Catalytic_Enzymes"/>
</dbReference>
<dbReference type="InterPro" id="IPR023023">
    <property type="entry name" value="dNTPase_2"/>
</dbReference>
<dbReference type="InterPro" id="IPR003607">
    <property type="entry name" value="HD/PDEase_dom"/>
</dbReference>
<dbReference type="InterPro" id="IPR006674">
    <property type="entry name" value="HD_domain"/>
</dbReference>
<dbReference type="InterPro" id="IPR026875">
    <property type="entry name" value="PHydrolase_assoc_dom"/>
</dbReference>
<dbReference type="NCBIfam" id="TIGR01353">
    <property type="entry name" value="dGTP_triPase"/>
    <property type="match status" value="1"/>
</dbReference>
<dbReference type="NCBIfam" id="NF002326">
    <property type="entry name" value="PRK01286.1-1"/>
    <property type="match status" value="1"/>
</dbReference>
<dbReference type="NCBIfam" id="NF002328">
    <property type="entry name" value="PRK01286.1-3"/>
    <property type="match status" value="1"/>
</dbReference>
<dbReference type="PANTHER" id="PTHR35795:SF1">
    <property type="entry name" value="BIS(5'-NUCLEOSYL)-TETRAPHOSPHATASE, SYMMETRICAL"/>
    <property type="match status" value="1"/>
</dbReference>
<dbReference type="PANTHER" id="PTHR35795">
    <property type="entry name" value="SLR1885 PROTEIN"/>
    <property type="match status" value="1"/>
</dbReference>
<dbReference type="Pfam" id="PF01966">
    <property type="entry name" value="HD"/>
    <property type="match status" value="1"/>
</dbReference>
<dbReference type="Pfam" id="PF13286">
    <property type="entry name" value="HD_assoc"/>
    <property type="match status" value="1"/>
</dbReference>
<dbReference type="SMART" id="SM00471">
    <property type="entry name" value="HDc"/>
    <property type="match status" value="1"/>
</dbReference>
<dbReference type="SUPFAM" id="SSF109604">
    <property type="entry name" value="HD-domain/PDEase-like"/>
    <property type="match status" value="1"/>
</dbReference>
<dbReference type="PROSITE" id="PS51831">
    <property type="entry name" value="HD"/>
    <property type="match status" value="1"/>
</dbReference>
<accession>Q1GI81</accession>
<sequence>MYAPYATMPDRSRGRAVPEEESSFRSPFQRDRDRIIHASAFRRLKHKTQVFVEHEGDNYRTRLTHSIEVGQVARTIAGALGLNQELTEAVALAHDLGHTPFGHTGEDALHEMMAPYGGFDHNAQAIRIVTALERHYAEFDGLNLTWETLEAIAKHNGPVVGELPWALAACNRGIDLELHTHASAEAQVAALADDIAYNHHDLHDGLRAGLFTDDDVCSLSIIAPAYAEVDEIYPGLDHNRRRHEALRRFFGVMVSDVIETSRRKIAASGAQSVEEIRALDHAVVTFSDEIWTQLRELRAFMFTRMYRAPSVMVVRERVAVVVKALFAYYLENTMAMPERWHGDIRKAETETDRARIVSDYIAGMTDRFALQLYDRLALGA</sequence>
<protein>
    <recommendedName>
        <fullName evidence="1">Deoxyguanosinetriphosphate triphosphohydrolase-like protein</fullName>
    </recommendedName>
</protein>
<organism>
    <name type="scientific">Ruegeria sp. (strain TM1040)</name>
    <name type="common">Silicibacter sp.</name>
    <dbReference type="NCBI Taxonomy" id="292414"/>
    <lineage>
        <taxon>Bacteria</taxon>
        <taxon>Pseudomonadati</taxon>
        <taxon>Pseudomonadota</taxon>
        <taxon>Alphaproteobacteria</taxon>
        <taxon>Rhodobacterales</taxon>
        <taxon>Roseobacteraceae</taxon>
        <taxon>Ruegeria</taxon>
    </lineage>
</organism>